<feature type="chain" id="PRO_0000349903" description="Ribosomal RNA large subunit methyltransferase F">
    <location>
        <begin position="1"/>
        <end position="309"/>
    </location>
</feature>
<dbReference type="EC" id="2.1.1.181" evidence="1"/>
<dbReference type="EMBL" id="CP000783">
    <property type="protein sequence ID" value="ABU77778.1"/>
    <property type="molecule type" value="Genomic_DNA"/>
</dbReference>
<dbReference type="RefSeq" id="WP_012125278.1">
    <property type="nucleotide sequence ID" value="NC_009778.1"/>
</dbReference>
<dbReference type="SMR" id="A7MEZ1"/>
<dbReference type="KEGG" id="esa:ESA_02533"/>
<dbReference type="PATRIC" id="fig|290339.8.peg.2255"/>
<dbReference type="HOGENOM" id="CLU_027534_3_0_6"/>
<dbReference type="Proteomes" id="UP000000260">
    <property type="component" value="Chromosome"/>
</dbReference>
<dbReference type="GO" id="GO:0005737">
    <property type="term" value="C:cytoplasm"/>
    <property type="evidence" value="ECO:0007669"/>
    <property type="project" value="UniProtKB-SubCell"/>
</dbReference>
<dbReference type="GO" id="GO:0052907">
    <property type="term" value="F:23S rRNA (adenine(1618)-N(6))-methyltransferase activity"/>
    <property type="evidence" value="ECO:0007669"/>
    <property type="project" value="UniProtKB-EC"/>
</dbReference>
<dbReference type="GO" id="GO:0070475">
    <property type="term" value="P:rRNA base methylation"/>
    <property type="evidence" value="ECO:0007669"/>
    <property type="project" value="TreeGrafter"/>
</dbReference>
<dbReference type="CDD" id="cd02440">
    <property type="entry name" value="AdoMet_MTases"/>
    <property type="match status" value="1"/>
</dbReference>
<dbReference type="FunFam" id="3.40.50.150:FF:000045">
    <property type="entry name" value="Ribosomal RNA large subunit methyltransferase F"/>
    <property type="match status" value="1"/>
</dbReference>
<dbReference type="Gene3D" id="3.40.50.150">
    <property type="entry name" value="Vaccinia Virus protein VP39"/>
    <property type="match status" value="1"/>
</dbReference>
<dbReference type="HAMAP" id="MF_01848">
    <property type="entry name" value="23SrRNA_methyltr_F"/>
    <property type="match status" value="1"/>
</dbReference>
<dbReference type="InterPro" id="IPR010286">
    <property type="entry name" value="METTL16/RlmF"/>
</dbReference>
<dbReference type="InterPro" id="IPR016909">
    <property type="entry name" value="rRNA_lsu_MeTfrase_F"/>
</dbReference>
<dbReference type="InterPro" id="IPR029063">
    <property type="entry name" value="SAM-dependent_MTases_sf"/>
</dbReference>
<dbReference type="NCBIfam" id="NF008725">
    <property type="entry name" value="PRK11727.1"/>
    <property type="match status" value="1"/>
</dbReference>
<dbReference type="PANTHER" id="PTHR13393:SF0">
    <property type="entry name" value="RNA N6-ADENOSINE-METHYLTRANSFERASE METTL16"/>
    <property type="match status" value="1"/>
</dbReference>
<dbReference type="PANTHER" id="PTHR13393">
    <property type="entry name" value="SAM-DEPENDENT METHYLTRANSFERASE"/>
    <property type="match status" value="1"/>
</dbReference>
<dbReference type="Pfam" id="PF05971">
    <property type="entry name" value="Methyltransf_10"/>
    <property type="match status" value="1"/>
</dbReference>
<dbReference type="PIRSF" id="PIRSF029038">
    <property type="entry name" value="Mtase_YbiN_prd"/>
    <property type="match status" value="1"/>
</dbReference>
<dbReference type="SUPFAM" id="SSF53335">
    <property type="entry name" value="S-adenosyl-L-methionine-dependent methyltransferases"/>
    <property type="match status" value="1"/>
</dbReference>
<gene>
    <name evidence="1" type="primary">rlmF</name>
    <name type="ordered locus">ESA_02533</name>
</gene>
<evidence type="ECO:0000255" key="1">
    <source>
        <dbReference type="HAMAP-Rule" id="MF_01848"/>
    </source>
</evidence>
<keyword id="KW-0963">Cytoplasm</keyword>
<keyword id="KW-0489">Methyltransferase</keyword>
<keyword id="KW-1185">Reference proteome</keyword>
<keyword id="KW-0698">rRNA processing</keyword>
<keyword id="KW-0949">S-adenosyl-L-methionine</keyword>
<keyword id="KW-0808">Transferase</keyword>
<sequence length="309" mass="34000">MNRKPGLHPRNRHHSRYDFDALTESCPALGAFVRPSPAGEPTIDFADPQAVKTLNQALLAHFYGVREWDIPDGFLCPPVPGRADYIHHLADLLAEGNGGALPAQASVLDIGVGANCIYPLIGQHEYGWRFTGTDTSDEAIRSASAIIDANPGLNRAIRLRRQKSPGAIFNGIIHKNESYDATLCNPPFHDSADAAEAGNARKRRNLGLAADSGLNFGGQQQELWCEGGEVGFITQMIAESKLFARQVLWFTTLVSKGDNLPLLYRALEQAGAVKVVKKEMAQGQKQSRFIAWSFLDTAQRERWAQNRLR</sequence>
<proteinExistence type="inferred from homology"/>
<reference key="1">
    <citation type="journal article" date="2010" name="PLoS ONE">
        <title>Genome sequence of Cronobacter sakazakii BAA-894 and comparative genomic hybridization analysis with other Cronobacter species.</title>
        <authorList>
            <person name="Kucerova E."/>
            <person name="Clifton S.W."/>
            <person name="Xia X.Q."/>
            <person name="Long F."/>
            <person name="Porwollik S."/>
            <person name="Fulton L."/>
            <person name="Fronick C."/>
            <person name="Minx P."/>
            <person name="Kyung K."/>
            <person name="Warren W."/>
            <person name="Fulton R."/>
            <person name="Feng D."/>
            <person name="Wollam A."/>
            <person name="Shah N."/>
            <person name="Bhonagiri V."/>
            <person name="Nash W.E."/>
            <person name="Hallsworth-Pepin K."/>
            <person name="Wilson R.K."/>
            <person name="McClelland M."/>
            <person name="Forsythe S.J."/>
        </authorList>
    </citation>
    <scope>NUCLEOTIDE SEQUENCE [LARGE SCALE GENOMIC DNA]</scope>
    <source>
        <strain>ATCC BAA-894</strain>
    </source>
</reference>
<protein>
    <recommendedName>
        <fullName evidence="1">Ribosomal RNA large subunit methyltransferase F</fullName>
        <ecNumber evidence="1">2.1.1.181</ecNumber>
    </recommendedName>
    <alternativeName>
        <fullName evidence="1">23S rRNA mA1618 methyltransferase</fullName>
    </alternativeName>
    <alternativeName>
        <fullName evidence="1">rRNA adenine N-6-methyltransferase</fullName>
    </alternativeName>
</protein>
<name>RLMF_CROS8</name>
<comment type="function">
    <text evidence="1">Specifically methylates the adenine in position 1618 of 23S rRNA.</text>
</comment>
<comment type="catalytic activity">
    <reaction evidence="1">
        <text>adenosine(1618) in 23S rRNA + S-adenosyl-L-methionine = N(6)-methyladenosine(1618) in 23S rRNA + S-adenosyl-L-homocysteine + H(+)</text>
        <dbReference type="Rhea" id="RHEA:16497"/>
        <dbReference type="Rhea" id="RHEA-COMP:10229"/>
        <dbReference type="Rhea" id="RHEA-COMP:10231"/>
        <dbReference type="ChEBI" id="CHEBI:15378"/>
        <dbReference type="ChEBI" id="CHEBI:57856"/>
        <dbReference type="ChEBI" id="CHEBI:59789"/>
        <dbReference type="ChEBI" id="CHEBI:74411"/>
        <dbReference type="ChEBI" id="CHEBI:74449"/>
        <dbReference type="EC" id="2.1.1.181"/>
    </reaction>
</comment>
<comment type="subcellular location">
    <subcellularLocation>
        <location evidence="1">Cytoplasm</location>
    </subcellularLocation>
</comment>
<comment type="similarity">
    <text evidence="1">Belongs to the methyltransferase superfamily. METTL16/RlmF family.</text>
</comment>
<organism>
    <name type="scientific">Cronobacter sakazakii (strain ATCC BAA-894)</name>
    <name type="common">Enterobacter sakazakii</name>
    <dbReference type="NCBI Taxonomy" id="290339"/>
    <lineage>
        <taxon>Bacteria</taxon>
        <taxon>Pseudomonadati</taxon>
        <taxon>Pseudomonadota</taxon>
        <taxon>Gammaproteobacteria</taxon>
        <taxon>Enterobacterales</taxon>
        <taxon>Enterobacteriaceae</taxon>
        <taxon>Cronobacter</taxon>
    </lineage>
</organism>
<accession>A7MEZ1</accession>